<keyword id="KW-0963">Cytoplasm</keyword>
<keyword id="KW-0255">Endonuclease</keyword>
<keyword id="KW-0378">Hydrolase</keyword>
<keyword id="KW-0464">Manganese</keyword>
<keyword id="KW-0479">Metal-binding</keyword>
<keyword id="KW-0540">Nuclease</keyword>
<proteinExistence type="inferred from homology"/>
<evidence type="ECO:0000255" key="1">
    <source>
        <dbReference type="HAMAP-Rule" id="MF_00052"/>
    </source>
</evidence>
<evidence type="ECO:0000255" key="2">
    <source>
        <dbReference type="PROSITE-ProRule" id="PRU01319"/>
    </source>
</evidence>
<name>RNH2_LACLS</name>
<gene>
    <name evidence="1" type="primary">rnhB</name>
    <name type="ordered locus">LACR_1415</name>
</gene>
<comment type="function">
    <text evidence="1">Endonuclease that specifically degrades the RNA of RNA-DNA hybrids.</text>
</comment>
<comment type="catalytic activity">
    <reaction evidence="1">
        <text>Endonucleolytic cleavage to 5'-phosphomonoester.</text>
        <dbReference type="EC" id="3.1.26.4"/>
    </reaction>
</comment>
<comment type="cofactor">
    <cofactor evidence="1">
        <name>Mn(2+)</name>
        <dbReference type="ChEBI" id="CHEBI:29035"/>
    </cofactor>
    <cofactor evidence="1">
        <name>Mg(2+)</name>
        <dbReference type="ChEBI" id="CHEBI:18420"/>
    </cofactor>
    <text evidence="1">Manganese or magnesium. Binds 1 divalent metal ion per monomer in the absence of substrate. May bind a second metal ion after substrate binding.</text>
</comment>
<comment type="subcellular location">
    <subcellularLocation>
        <location evidence="1">Cytoplasm</location>
    </subcellularLocation>
</comment>
<comment type="similarity">
    <text evidence="1">Belongs to the RNase HII family.</text>
</comment>
<organism>
    <name type="scientific">Lactococcus lactis subsp. cremoris (strain SK11)</name>
    <dbReference type="NCBI Taxonomy" id="272622"/>
    <lineage>
        <taxon>Bacteria</taxon>
        <taxon>Bacillati</taxon>
        <taxon>Bacillota</taxon>
        <taxon>Bacilli</taxon>
        <taxon>Lactobacillales</taxon>
        <taxon>Streptococcaceae</taxon>
        <taxon>Lactococcus</taxon>
        <taxon>Lactococcus cremoris subsp. cremoris</taxon>
    </lineage>
</organism>
<reference key="1">
    <citation type="journal article" date="2006" name="Proc. Natl. Acad. Sci. U.S.A.">
        <title>Comparative genomics of the lactic acid bacteria.</title>
        <authorList>
            <person name="Makarova K.S."/>
            <person name="Slesarev A."/>
            <person name="Wolf Y.I."/>
            <person name="Sorokin A."/>
            <person name="Mirkin B."/>
            <person name="Koonin E.V."/>
            <person name="Pavlov A."/>
            <person name="Pavlova N."/>
            <person name="Karamychev V."/>
            <person name="Polouchine N."/>
            <person name="Shakhova V."/>
            <person name="Grigoriev I."/>
            <person name="Lou Y."/>
            <person name="Rohksar D."/>
            <person name="Lucas S."/>
            <person name="Huang K."/>
            <person name="Goodstein D.M."/>
            <person name="Hawkins T."/>
            <person name="Plengvidhya V."/>
            <person name="Welker D."/>
            <person name="Hughes J."/>
            <person name="Goh Y."/>
            <person name="Benson A."/>
            <person name="Baldwin K."/>
            <person name="Lee J.-H."/>
            <person name="Diaz-Muniz I."/>
            <person name="Dosti B."/>
            <person name="Smeianov V."/>
            <person name="Wechter W."/>
            <person name="Barabote R."/>
            <person name="Lorca G."/>
            <person name="Altermann E."/>
            <person name="Barrangou R."/>
            <person name="Ganesan B."/>
            <person name="Xie Y."/>
            <person name="Rawsthorne H."/>
            <person name="Tamir D."/>
            <person name="Parker C."/>
            <person name="Breidt F."/>
            <person name="Broadbent J.R."/>
            <person name="Hutkins R."/>
            <person name="O'Sullivan D."/>
            <person name="Steele J."/>
            <person name="Unlu G."/>
            <person name="Saier M.H. Jr."/>
            <person name="Klaenhammer T."/>
            <person name="Richardson P."/>
            <person name="Kozyavkin S."/>
            <person name="Weimer B.C."/>
            <person name="Mills D.A."/>
        </authorList>
    </citation>
    <scope>NUCLEOTIDE SEQUENCE [LARGE SCALE GENOMIC DNA]</scope>
    <source>
        <strain>SK11</strain>
    </source>
</reference>
<sequence length="258" mass="28604">MGQTIKEIKARLAELTDLSAKEFLEFETDERAGVQAALKSRKKQILAECAEDERLEQMLEFEKELYSQEIELIAGIDEVGRGALAGPVVTAAVILPKNCKIRGLNDSKKVPKSKHHAILSEIQEKALAIGIGIVDAEKIDEVNIYEATKIAMIQAVSKLSLKPEHLLIDAMVLDLPIAQTKIIHGDARSASIAAASIVAKVTRDEMMKDFALEFPEYDFEHNAGYGTAKHLAALTKYGITRIHRKSYEPIKSMVNFKY</sequence>
<dbReference type="EC" id="3.1.26.4" evidence="1"/>
<dbReference type="EMBL" id="CP000425">
    <property type="protein sequence ID" value="ABJ72930.1"/>
    <property type="molecule type" value="Genomic_DNA"/>
</dbReference>
<dbReference type="RefSeq" id="WP_011676219.1">
    <property type="nucleotide sequence ID" value="NC_008527.1"/>
</dbReference>
<dbReference type="SMR" id="Q02YP2"/>
<dbReference type="KEGG" id="llc:LACR_1415"/>
<dbReference type="HOGENOM" id="CLU_036532_2_1_9"/>
<dbReference type="Proteomes" id="UP000000240">
    <property type="component" value="Chromosome"/>
</dbReference>
<dbReference type="GO" id="GO:0005737">
    <property type="term" value="C:cytoplasm"/>
    <property type="evidence" value="ECO:0007669"/>
    <property type="project" value="UniProtKB-SubCell"/>
</dbReference>
<dbReference type="GO" id="GO:0032299">
    <property type="term" value="C:ribonuclease H2 complex"/>
    <property type="evidence" value="ECO:0007669"/>
    <property type="project" value="TreeGrafter"/>
</dbReference>
<dbReference type="GO" id="GO:0030145">
    <property type="term" value="F:manganese ion binding"/>
    <property type="evidence" value="ECO:0007669"/>
    <property type="project" value="UniProtKB-UniRule"/>
</dbReference>
<dbReference type="GO" id="GO:0003723">
    <property type="term" value="F:RNA binding"/>
    <property type="evidence" value="ECO:0007669"/>
    <property type="project" value="InterPro"/>
</dbReference>
<dbReference type="GO" id="GO:0004523">
    <property type="term" value="F:RNA-DNA hybrid ribonuclease activity"/>
    <property type="evidence" value="ECO:0007669"/>
    <property type="project" value="UniProtKB-UniRule"/>
</dbReference>
<dbReference type="GO" id="GO:0043137">
    <property type="term" value="P:DNA replication, removal of RNA primer"/>
    <property type="evidence" value="ECO:0007669"/>
    <property type="project" value="TreeGrafter"/>
</dbReference>
<dbReference type="GO" id="GO:0006298">
    <property type="term" value="P:mismatch repair"/>
    <property type="evidence" value="ECO:0007669"/>
    <property type="project" value="TreeGrafter"/>
</dbReference>
<dbReference type="CDD" id="cd07182">
    <property type="entry name" value="RNase_HII_bacteria_HII_like"/>
    <property type="match status" value="1"/>
</dbReference>
<dbReference type="FunFam" id="3.30.420.10:FF:000006">
    <property type="entry name" value="Ribonuclease HII"/>
    <property type="match status" value="1"/>
</dbReference>
<dbReference type="Gene3D" id="3.30.420.10">
    <property type="entry name" value="Ribonuclease H-like superfamily/Ribonuclease H"/>
    <property type="match status" value="1"/>
</dbReference>
<dbReference type="HAMAP" id="MF_00052_B">
    <property type="entry name" value="RNase_HII_B"/>
    <property type="match status" value="1"/>
</dbReference>
<dbReference type="InterPro" id="IPR022898">
    <property type="entry name" value="RNase_HII"/>
</dbReference>
<dbReference type="InterPro" id="IPR001352">
    <property type="entry name" value="RNase_HII/HIII"/>
</dbReference>
<dbReference type="InterPro" id="IPR024567">
    <property type="entry name" value="RNase_HII/HIII_dom"/>
</dbReference>
<dbReference type="InterPro" id="IPR012337">
    <property type="entry name" value="RNaseH-like_sf"/>
</dbReference>
<dbReference type="InterPro" id="IPR036397">
    <property type="entry name" value="RNaseH_sf"/>
</dbReference>
<dbReference type="NCBIfam" id="NF000594">
    <property type="entry name" value="PRK00015.1-1"/>
    <property type="match status" value="1"/>
</dbReference>
<dbReference type="NCBIfam" id="NF000595">
    <property type="entry name" value="PRK00015.1-3"/>
    <property type="match status" value="1"/>
</dbReference>
<dbReference type="PANTHER" id="PTHR10954">
    <property type="entry name" value="RIBONUCLEASE H2 SUBUNIT A"/>
    <property type="match status" value="1"/>
</dbReference>
<dbReference type="PANTHER" id="PTHR10954:SF18">
    <property type="entry name" value="RIBONUCLEASE HII"/>
    <property type="match status" value="1"/>
</dbReference>
<dbReference type="Pfam" id="PF01351">
    <property type="entry name" value="RNase_HII"/>
    <property type="match status" value="1"/>
</dbReference>
<dbReference type="SUPFAM" id="SSF53098">
    <property type="entry name" value="Ribonuclease H-like"/>
    <property type="match status" value="1"/>
</dbReference>
<dbReference type="PROSITE" id="PS51975">
    <property type="entry name" value="RNASE_H_2"/>
    <property type="match status" value="1"/>
</dbReference>
<accession>Q02YP2</accession>
<feature type="chain" id="PRO_1000031157" description="Ribonuclease HII">
    <location>
        <begin position="1"/>
        <end position="258"/>
    </location>
</feature>
<feature type="domain" description="RNase H type-2" evidence="2">
    <location>
        <begin position="71"/>
        <end position="258"/>
    </location>
</feature>
<feature type="binding site" evidence="1">
    <location>
        <position position="77"/>
    </location>
    <ligand>
        <name>a divalent metal cation</name>
        <dbReference type="ChEBI" id="CHEBI:60240"/>
    </ligand>
</feature>
<feature type="binding site" evidence="1">
    <location>
        <position position="78"/>
    </location>
    <ligand>
        <name>a divalent metal cation</name>
        <dbReference type="ChEBI" id="CHEBI:60240"/>
    </ligand>
</feature>
<feature type="binding site" evidence="1">
    <location>
        <position position="169"/>
    </location>
    <ligand>
        <name>a divalent metal cation</name>
        <dbReference type="ChEBI" id="CHEBI:60240"/>
    </ligand>
</feature>
<protein>
    <recommendedName>
        <fullName evidence="1">Ribonuclease HII</fullName>
        <shortName evidence="1">RNase HII</shortName>
        <ecNumber evidence="1">3.1.26.4</ecNumber>
    </recommendedName>
</protein>